<reference key="1">
    <citation type="journal article" date="2004" name="Proc. Natl. Acad. Sci. U.S.A.">
        <title>Complete genomes of two clinical Staphylococcus aureus strains: evidence for the rapid evolution of virulence and drug resistance.</title>
        <authorList>
            <person name="Holden M.T.G."/>
            <person name="Feil E.J."/>
            <person name="Lindsay J.A."/>
            <person name="Peacock S.J."/>
            <person name="Day N.P.J."/>
            <person name="Enright M.C."/>
            <person name="Foster T.J."/>
            <person name="Moore C.E."/>
            <person name="Hurst L."/>
            <person name="Atkin R."/>
            <person name="Barron A."/>
            <person name="Bason N."/>
            <person name="Bentley S.D."/>
            <person name="Chillingworth C."/>
            <person name="Chillingworth T."/>
            <person name="Churcher C."/>
            <person name="Clark L."/>
            <person name="Corton C."/>
            <person name="Cronin A."/>
            <person name="Doggett J."/>
            <person name="Dowd L."/>
            <person name="Feltwell T."/>
            <person name="Hance Z."/>
            <person name="Harris B."/>
            <person name="Hauser H."/>
            <person name="Holroyd S."/>
            <person name="Jagels K."/>
            <person name="James K.D."/>
            <person name="Lennard N."/>
            <person name="Line A."/>
            <person name="Mayes R."/>
            <person name="Moule S."/>
            <person name="Mungall K."/>
            <person name="Ormond D."/>
            <person name="Quail M.A."/>
            <person name="Rabbinowitsch E."/>
            <person name="Rutherford K.M."/>
            <person name="Sanders M."/>
            <person name="Sharp S."/>
            <person name="Simmonds M."/>
            <person name="Stevens K."/>
            <person name="Whitehead S."/>
            <person name="Barrell B.G."/>
            <person name="Spratt B.G."/>
            <person name="Parkhill J."/>
        </authorList>
    </citation>
    <scope>NUCLEOTIDE SEQUENCE [LARGE SCALE GENOMIC DNA]</scope>
    <source>
        <strain>MRSA252</strain>
    </source>
</reference>
<feature type="chain" id="PRO_0000351397" description="PTS system glucose-specific EIICBA component">
    <location>
        <begin position="1"/>
        <end position="681"/>
    </location>
</feature>
<feature type="transmembrane region" description="Helical" evidence="4">
    <location>
        <begin position="16"/>
        <end position="36"/>
    </location>
</feature>
<feature type="transmembrane region" description="Helical" evidence="4">
    <location>
        <begin position="73"/>
        <end position="93"/>
    </location>
</feature>
<feature type="transmembrane region" description="Helical" evidence="4">
    <location>
        <begin position="126"/>
        <end position="146"/>
    </location>
</feature>
<feature type="transmembrane region" description="Helical" evidence="4">
    <location>
        <begin position="170"/>
        <end position="190"/>
    </location>
</feature>
<feature type="transmembrane region" description="Helical" evidence="4">
    <location>
        <begin position="199"/>
        <end position="219"/>
    </location>
</feature>
<feature type="transmembrane region" description="Helical" evidence="4">
    <location>
        <begin position="273"/>
        <end position="293"/>
    </location>
</feature>
<feature type="transmembrane region" description="Helical" evidence="4">
    <location>
        <begin position="303"/>
        <end position="323"/>
    </location>
</feature>
<feature type="transmembrane region" description="Helical" evidence="4">
    <location>
        <begin position="328"/>
        <end position="348"/>
    </location>
</feature>
<feature type="transmembrane region" description="Helical" evidence="4">
    <location>
        <begin position="355"/>
        <end position="375"/>
    </location>
</feature>
<feature type="transmembrane region" description="Helical" evidence="4">
    <location>
        <begin position="383"/>
        <end position="403"/>
    </location>
</feature>
<feature type="domain" description="PTS EIIC type-1" evidence="4">
    <location>
        <begin position="3"/>
        <end position="414"/>
    </location>
</feature>
<feature type="domain" description="PTS EIIB type-1" evidence="3">
    <location>
        <begin position="425"/>
        <end position="506"/>
    </location>
</feature>
<feature type="domain" description="PTS EIIA type-1" evidence="2">
    <location>
        <begin position="551"/>
        <end position="655"/>
    </location>
</feature>
<feature type="active site" description="Phosphocysteine intermediate; for EIIB activity" evidence="3">
    <location>
        <position position="447"/>
    </location>
</feature>
<feature type="active site" description="Tele-phosphohistidine intermediate; for EIIA activity" evidence="2">
    <location>
        <position position="603"/>
    </location>
</feature>
<organism>
    <name type="scientific">Staphylococcus aureus (strain MRSA252)</name>
    <dbReference type="NCBI Taxonomy" id="282458"/>
    <lineage>
        <taxon>Bacteria</taxon>
        <taxon>Bacillati</taxon>
        <taxon>Bacillota</taxon>
        <taxon>Bacilli</taxon>
        <taxon>Bacillales</taxon>
        <taxon>Staphylococcaceae</taxon>
        <taxon>Staphylococcus</taxon>
    </lineage>
</organism>
<dbReference type="EC" id="2.7.1.199" evidence="1"/>
<dbReference type="EMBL" id="BX571856">
    <property type="protein sequence ID" value="CAG39217.1"/>
    <property type="molecule type" value="Genomic_DNA"/>
</dbReference>
<dbReference type="RefSeq" id="WP_001227718.1">
    <property type="nucleotide sequence ID" value="NC_002952.2"/>
</dbReference>
<dbReference type="SMR" id="Q6GKB7"/>
<dbReference type="KEGG" id="sar:SAR0190"/>
<dbReference type="HOGENOM" id="CLU_012312_1_1_9"/>
<dbReference type="Proteomes" id="UP000000596">
    <property type="component" value="Chromosome"/>
</dbReference>
<dbReference type="GO" id="GO:0005886">
    <property type="term" value="C:plasma membrane"/>
    <property type="evidence" value="ECO:0007669"/>
    <property type="project" value="UniProtKB-SubCell"/>
</dbReference>
<dbReference type="GO" id="GO:0055056">
    <property type="term" value="F:D-glucose transmembrane transporter activity"/>
    <property type="evidence" value="ECO:0007669"/>
    <property type="project" value="InterPro"/>
</dbReference>
<dbReference type="GO" id="GO:0016301">
    <property type="term" value="F:kinase activity"/>
    <property type="evidence" value="ECO:0007669"/>
    <property type="project" value="UniProtKB-KW"/>
</dbReference>
<dbReference type="GO" id="GO:0008982">
    <property type="term" value="F:protein-N(PI)-phosphohistidine-sugar phosphotransferase activity"/>
    <property type="evidence" value="ECO:0007669"/>
    <property type="project" value="InterPro"/>
</dbReference>
<dbReference type="GO" id="GO:0090563">
    <property type="term" value="F:protein-phosphocysteine-sugar phosphotransferase activity"/>
    <property type="evidence" value="ECO:0007669"/>
    <property type="project" value="TreeGrafter"/>
</dbReference>
<dbReference type="GO" id="GO:1904659">
    <property type="term" value="P:D-glucose transmembrane transport"/>
    <property type="evidence" value="ECO:0007669"/>
    <property type="project" value="InterPro"/>
</dbReference>
<dbReference type="GO" id="GO:0009401">
    <property type="term" value="P:phosphoenolpyruvate-dependent sugar phosphotransferase system"/>
    <property type="evidence" value="ECO:0007669"/>
    <property type="project" value="UniProtKB-KW"/>
</dbReference>
<dbReference type="CDD" id="cd00210">
    <property type="entry name" value="PTS_IIA_glc"/>
    <property type="match status" value="1"/>
</dbReference>
<dbReference type="CDD" id="cd00212">
    <property type="entry name" value="PTS_IIB_glc"/>
    <property type="match status" value="1"/>
</dbReference>
<dbReference type="FunFam" id="2.70.70.10:FF:000001">
    <property type="entry name" value="PTS system glucose-specific IIA component"/>
    <property type="match status" value="1"/>
</dbReference>
<dbReference type="FunFam" id="3.30.1360.60:FF:000001">
    <property type="entry name" value="PTS system glucose-specific IIBC component PtsG"/>
    <property type="match status" value="1"/>
</dbReference>
<dbReference type="Gene3D" id="2.70.70.10">
    <property type="entry name" value="Glucose Permease (Domain IIA)"/>
    <property type="match status" value="1"/>
</dbReference>
<dbReference type="Gene3D" id="3.30.1360.60">
    <property type="entry name" value="Glucose permease domain IIB"/>
    <property type="match status" value="1"/>
</dbReference>
<dbReference type="InterPro" id="IPR011055">
    <property type="entry name" value="Dup_hybrid_motif"/>
</dbReference>
<dbReference type="InterPro" id="IPR036878">
    <property type="entry name" value="Glu_permease_IIB"/>
</dbReference>
<dbReference type="InterPro" id="IPR018113">
    <property type="entry name" value="PTrfase_EIIB_Cys"/>
</dbReference>
<dbReference type="InterPro" id="IPR001127">
    <property type="entry name" value="PTS_EIIA_1_perm"/>
</dbReference>
<dbReference type="InterPro" id="IPR003352">
    <property type="entry name" value="PTS_EIIC"/>
</dbReference>
<dbReference type="InterPro" id="IPR013013">
    <property type="entry name" value="PTS_EIIC_1"/>
</dbReference>
<dbReference type="InterPro" id="IPR050429">
    <property type="entry name" value="PTS_Glucose_EIICBA"/>
</dbReference>
<dbReference type="InterPro" id="IPR001996">
    <property type="entry name" value="PTS_IIB_1"/>
</dbReference>
<dbReference type="InterPro" id="IPR011299">
    <property type="entry name" value="PTS_IIBC_glc"/>
</dbReference>
<dbReference type="NCBIfam" id="TIGR00826">
    <property type="entry name" value="EIIB_glc"/>
    <property type="match status" value="1"/>
</dbReference>
<dbReference type="NCBIfam" id="TIGR00830">
    <property type="entry name" value="PTBA"/>
    <property type="match status" value="1"/>
</dbReference>
<dbReference type="NCBIfam" id="TIGR02002">
    <property type="entry name" value="PTS-II-BC-glcB"/>
    <property type="match status" value="1"/>
</dbReference>
<dbReference type="PANTHER" id="PTHR30009">
    <property type="entry name" value="CYTOCHROME C-TYPE SYNTHESIS PROTEIN AND PTS TRANSMEMBRANE COMPONENT"/>
    <property type="match status" value="1"/>
</dbReference>
<dbReference type="PANTHER" id="PTHR30009:SF20">
    <property type="entry name" value="PTS SYSTEM GLUCOSE-SPECIFIC EIICB COMPONENT-RELATED"/>
    <property type="match status" value="1"/>
</dbReference>
<dbReference type="Pfam" id="PF00358">
    <property type="entry name" value="PTS_EIIA_1"/>
    <property type="match status" value="1"/>
</dbReference>
<dbReference type="Pfam" id="PF00367">
    <property type="entry name" value="PTS_EIIB"/>
    <property type="match status" value="1"/>
</dbReference>
<dbReference type="Pfam" id="PF02378">
    <property type="entry name" value="PTS_EIIC"/>
    <property type="match status" value="1"/>
</dbReference>
<dbReference type="SUPFAM" id="SSF51261">
    <property type="entry name" value="Duplicated hybrid motif"/>
    <property type="match status" value="1"/>
</dbReference>
<dbReference type="SUPFAM" id="SSF55604">
    <property type="entry name" value="Glucose permease domain IIB"/>
    <property type="match status" value="1"/>
</dbReference>
<dbReference type="PROSITE" id="PS51093">
    <property type="entry name" value="PTS_EIIA_TYPE_1"/>
    <property type="match status" value="1"/>
</dbReference>
<dbReference type="PROSITE" id="PS00371">
    <property type="entry name" value="PTS_EIIA_TYPE_1_HIS"/>
    <property type="match status" value="1"/>
</dbReference>
<dbReference type="PROSITE" id="PS51098">
    <property type="entry name" value="PTS_EIIB_TYPE_1"/>
    <property type="match status" value="1"/>
</dbReference>
<dbReference type="PROSITE" id="PS01035">
    <property type="entry name" value="PTS_EIIB_TYPE_1_CYS"/>
    <property type="match status" value="1"/>
</dbReference>
<dbReference type="PROSITE" id="PS51103">
    <property type="entry name" value="PTS_EIIC_TYPE_1"/>
    <property type="match status" value="1"/>
</dbReference>
<comment type="function">
    <text evidence="1">The phosphoenolpyruvate-dependent sugar phosphotransferase system (sugar PTS), a major carbohydrate active transport system, catalyzes the phosphorylation of incoming sugar substrates concomitantly with their translocation across the cell membrane. This system is involved in glucose transport.</text>
</comment>
<comment type="catalytic activity">
    <reaction evidence="1">
        <text>N(pros)-phospho-L-histidyl-[protein] + D-glucose(out) = D-glucose 6-phosphate(in) + L-histidyl-[protein]</text>
        <dbReference type="Rhea" id="RHEA:33367"/>
        <dbReference type="Rhea" id="RHEA-COMP:9745"/>
        <dbReference type="Rhea" id="RHEA-COMP:9746"/>
        <dbReference type="ChEBI" id="CHEBI:4167"/>
        <dbReference type="ChEBI" id="CHEBI:29979"/>
        <dbReference type="ChEBI" id="CHEBI:61548"/>
        <dbReference type="ChEBI" id="CHEBI:64837"/>
        <dbReference type="EC" id="2.7.1.199"/>
    </reaction>
</comment>
<comment type="subcellular location">
    <subcellularLocation>
        <location evidence="4">Cell membrane</location>
        <topology evidence="4">Multi-pass membrane protein</topology>
    </subcellularLocation>
</comment>
<comment type="domain">
    <text evidence="4">The EIIC domain forms the PTS system translocation channel and contains the specific substrate-binding site.</text>
</comment>
<comment type="domain">
    <text evidence="3">The EIIB domain is phosphorylated by phospho-EIIA on a cysteinyl or histidyl residue, depending on the transported sugar. Then, it transfers the phosphoryl group to the sugar substrate concomitantly with the sugar uptake processed by the EIIC domain.</text>
</comment>
<comment type="domain">
    <text evidence="2">The EIIA domain is phosphorylated by phospho-HPr on a histidyl residue. Then, it transfers the phosphoryl group to the EIIB domain.</text>
</comment>
<gene>
    <name type="primary">ptsG</name>
    <name type="synonym">glcA</name>
    <name type="ordered locus">SAR0190</name>
</gene>
<sequence>MRKKLFGQLQRIGKALMLPVAILPAAGLLLAIGTAMQGEALQHYLPFIQNGGVQTVAKLMTGAGGIIFDNLPMIFALGVAIGLAGGDGVAAIAAFVGYIIMNKTMGDFLQVTPKNIGDPASGYASILGIPTLQTGVFGGIIIGALAAWCYNKFYNINLPSYLGFFAGKRFVPIMMATTSFILAFPMALIWPTIQTGLNAFSTGLLDSNTGVAVFLFGFIKRLLIPFGLHHIFHAPFWFEFGSWKNAAGEIIHGDQRIFIEQIREGAHLTAGKFMQGEFPVMMFGLPAAALAIYHTAKPENKKVVAGLMGSAALTSFLTGITEPLEFSFLFVAPLLFFIHAVLDGLSFLTLYLLDLHLGYTFSGGFIDYFLLGILPNKTQWWLVIPVGLVYAVIYYFVFRFLIVKLKYKTPGREDKQSQAATASATELPYAVLEAMGGKANIKHLDACITRLRVEVNDKSKVDVPGLKDLGASGVLEVGNNMQAIFGPKSDQIKHEMQQIMNGQVVENPTTMEDDKDETVVVAEDKSATSELSHIVHAPLTGEVTPLSEVPDQVFSEKMMGDGIAIKPSQGEVRAPFNGKVQMIFPTKHAIGLVSDSGLELLIHIGLDTVKLNGEGFTLHVEEGQEVKQGDLLINFDLDYIRNHAKSDITPIIVTQGNITNLDFKQGEHGNISFGDQLFEAK</sequence>
<evidence type="ECO:0000250" key="1">
    <source>
        <dbReference type="UniProtKB" id="Q57071"/>
    </source>
</evidence>
<evidence type="ECO:0000255" key="2">
    <source>
        <dbReference type="PROSITE-ProRule" id="PRU00416"/>
    </source>
</evidence>
<evidence type="ECO:0000255" key="3">
    <source>
        <dbReference type="PROSITE-ProRule" id="PRU00421"/>
    </source>
</evidence>
<evidence type="ECO:0000255" key="4">
    <source>
        <dbReference type="PROSITE-ProRule" id="PRU00426"/>
    </source>
</evidence>
<evidence type="ECO:0000305" key="5"/>
<keyword id="KW-1003">Cell membrane</keyword>
<keyword id="KW-0418">Kinase</keyword>
<keyword id="KW-0472">Membrane</keyword>
<keyword id="KW-0598">Phosphotransferase system</keyword>
<keyword id="KW-0762">Sugar transport</keyword>
<keyword id="KW-0808">Transferase</keyword>
<keyword id="KW-0812">Transmembrane</keyword>
<keyword id="KW-1133">Transmembrane helix</keyword>
<keyword id="KW-0813">Transport</keyword>
<proteinExistence type="inferred from homology"/>
<protein>
    <recommendedName>
        <fullName evidence="1">PTS system glucose-specific EIICBA component</fullName>
        <ecNumber evidence="1">2.7.1.199</ecNumber>
    </recommendedName>
    <alternativeName>
        <fullName evidence="1">EIICBA-Glc</fullName>
        <shortName evidence="1">EII-Glc</shortName>
    </alternativeName>
    <alternativeName>
        <fullName evidence="5">EIICBA-Glc 1</fullName>
    </alternativeName>
    <domain>
        <recommendedName>
            <fullName evidence="1">Glucose permease IIC component</fullName>
        </recommendedName>
        <alternativeName>
            <fullName evidence="1">PTS system glucose-specific EIIC component</fullName>
        </alternativeName>
    </domain>
    <domain>
        <recommendedName>
            <fullName evidence="1">Glucose-specific phosphotransferase enzyme IIB component</fullName>
        </recommendedName>
        <alternativeName>
            <fullName evidence="1">PTS system glucose-specific EIIB component</fullName>
        </alternativeName>
    </domain>
    <domain>
        <recommendedName>
            <fullName evidence="1">Glucose-specific phosphotransferase enzyme IIA component</fullName>
        </recommendedName>
        <alternativeName>
            <fullName evidence="1">PTS system glucose-specific EIIA component</fullName>
        </alternativeName>
    </domain>
</protein>
<name>PTG3C_STAAR</name>
<accession>Q6GKB7</accession>